<comment type="function">
    <text evidence="1">Catalyzes the conversion of N-formimidoyl-L-glutamate to L-glutamate and formamide.</text>
</comment>
<comment type="catalytic activity">
    <reaction evidence="1">
        <text>N-formimidoyl-L-glutamate + H2O = formamide + L-glutamate</text>
        <dbReference type="Rhea" id="RHEA:22492"/>
        <dbReference type="ChEBI" id="CHEBI:15377"/>
        <dbReference type="ChEBI" id="CHEBI:16397"/>
        <dbReference type="ChEBI" id="CHEBI:29985"/>
        <dbReference type="ChEBI" id="CHEBI:58928"/>
        <dbReference type="EC" id="3.5.3.8"/>
    </reaction>
</comment>
<comment type="cofactor">
    <cofactor evidence="1">
        <name>Mn(2+)</name>
        <dbReference type="ChEBI" id="CHEBI:29035"/>
    </cofactor>
    <text evidence="1">Binds 2 manganese ions per subunit.</text>
</comment>
<comment type="pathway">
    <text evidence="1">Amino-acid degradation; L-histidine degradation into L-glutamate; L-glutamate from N-formimidoyl-L-glutamate (hydrolase route): step 1/1.</text>
</comment>
<comment type="similarity">
    <text evidence="1">Belongs to the arginase family.</text>
</comment>
<reference key="1">
    <citation type="journal article" date="2008" name="PLoS Genet.">
        <title>Complete genome sequence of the N2-fixing broad host range endophyte Klebsiella pneumoniae 342 and virulence predictions verified in mice.</title>
        <authorList>
            <person name="Fouts D.E."/>
            <person name="Tyler H.L."/>
            <person name="DeBoy R.T."/>
            <person name="Daugherty S."/>
            <person name="Ren Q."/>
            <person name="Badger J.H."/>
            <person name="Durkin A.S."/>
            <person name="Huot H."/>
            <person name="Shrivastava S."/>
            <person name="Kothari S."/>
            <person name="Dodson R.J."/>
            <person name="Mohamoud Y."/>
            <person name="Khouri H."/>
            <person name="Roesch L.F.W."/>
            <person name="Krogfelt K.A."/>
            <person name="Struve C."/>
            <person name="Triplett E.W."/>
            <person name="Methe B.A."/>
        </authorList>
    </citation>
    <scope>NUCLEOTIDE SEQUENCE [LARGE SCALE GENOMIC DNA]</scope>
    <source>
        <strain>342</strain>
    </source>
</reference>
<sequence length="318" mass="34523">MMLWQATPASLWQGRDDSAEAPNALRLFQTIARAERFAPQEMPGDIALLGFACDEGVRRNKGRTGAGHGPEALRRALANMASHQGHDRCVDMGTISVDGEQLEAAHQALREAVAACQRAGKRTLVLGGGHETAFGHGAGVLDAFPGEKVGIINLDAHLDLRFAECASSGTPFRQLALECDAQQRGFHYTCIGVSRAANTQALWDEAARRQVAVVEDLAVLADFDTHVLPELERNIAQYDRLYLTIDLDVLPAREMPAVSAPAALGVPLAILLRIVEPLCRSGKLQAVDLVEFNPQFDIDGQGARAAARLAWQIAHWWR</sequence>
<feature type="chain" id="PRO_1000133002" description="Formimidoylglutamase">
    <location>
        <begin position="1"/>
        <end position="318"/>
    </location>
</feature>
<feature type="binding site" evidence="1">
    <location>
        <position position="130"/>
    </location>
    <ligand>
        <name>Mn(2+)</name>
        <dbReference type="ChEBI" id="CHEBI:29035"/>
        <label>1</label>
    </ligand>
</feature>
<feature type="binding site" evidence="1">
    <location>
        <position position="155"/>
    </location>
    <ligand>
        <name>Mn(2+)</name>
        <dbReference type="ChEBI" id="CHEBI:29035"/>
        <label>1</label>
    </ligand>
</feature>
<feature type="binding site" evidence="1">
    <location>
        <position position="155"/>
    </location>
    <ligand>
        <name>Mn(2+)</name>
        <dbReference type="ChEBI" id="CHEBI:29035"/>
        <label>2</label>
    </ligand>
</feature>
<feature type="binding site" evidence="1">
    <location>
        <position position="157"/>
    </location>
    <ligand>
        <name>Mn(2+)</name>
        <dbReference type="ChEBI" id="CHEBI:29035"/>
        <label>2</label>
    </ligand>
</feature>
<feature type="binding site" evidence="1">
    <location>
        <position position="159"/>
    </location>
    <ligand>
        <name>Mn(2+)</name>
        <dbReference type="ChEBI" id="CHEBI:29035"/>
        <label>1</label>
    </ligand>
</feature>
<feature type="binding site" evidence="1">
    <location>
        <position position="246"/>
    </location>
    <ligand>
        <name>Mn(2+)</name>
        <dbReference type="ChEBI" id="CHEBI:29035"/>
        <label>1</label>
    </ligand>
</feature>
<feature type="binding site" evidence="1">
    <location>
        <position position="246"/>
    </location>
    <ligand>
        <name>Mn(2+)</name>
        <dbReference type="ChEBI" id="CHEBI:29035"/>
        <label>2</label>
    </ligand>
</feature>
<feature type="binding site" evidence="1">
    <location>
        <position position="248"/>
    </location>
    <ligand>
        <name>Mn(2+)</name>
        <dbReference type="ChEBI" id="CHEBI:29035"/>
        <label>2</label>
    </ligand>
</feature>
<keyword id="KW-0369">Histidine metabolism</keyword>
<keyword id="KW-0378">Hydrolase</keyword>
<keyword id="KW-0464">Manganese</keyword>
<keyword id="KW-0479">Metal-binding</keyword>
<organism>
    <name type="scientific">Klebsiella pneumoniae (strain 342)</name>
    <dbReference type="NCBI Taxonomy" id="507522"/>
    <lineage>
        <taxon>Bacteria</taxon>
        <taxon>Pseudomonadati</taxon>
        <taxon>Pseudomonadota</taxon>
        <taxon>Gammaproteobacteria</taxon>
        <taxon>Enterobacterales</taxon>
        <taxon>Enterobacteriaceae</taxon>
        <taxon>Klebsiella/Raoultella group</taxon>
        <taxon>Klebsiella</taxon>
        <taxon>Klebsiella pneumoniae complex</taxon>
    </lineage>
</organism>
<evidence type="ECO:0000255" key="1">
    <source>
        <dbReference type="HAMAP-Rule" id="MF_00737"/>
    </source>
</evidence>
<proteinExistence type="inferred from homology"/>
<protein>
    <recommendedName>
        <fullName evidence="1">Formimidoylglutamase</fullName>
        <ecNumber evidence="1">3.5.3.8</ecNumber>
    </recommendedName>
    <alternativeName>
        <fullName evidence="1">Formiminoglutamase</fullName>
    </alternativeName>
    <alternativeName>
        <fullName evidence="1">Formiminoglutamate hydrolase</fullName>
    </alternativeName>
</protein>
<name>HUTG_KLEP3</name>
<dbReference type="EC" id="3.5.3.8" evidence="1"/>
<dbReference type="EMBL" id="CP000964">
    <property type="protein sequence ID" value="ACI10168.1"/>
    <property type="molecule type" value="Genomic_DNA"/>
</dbReference>
<dbReference type="SMR" id="B5XZ82"/>
<dbReference type="KEGG" id="kpe:KPK_3780"/>
<dbReference type="HOGENOM" id="CLU_039478_2_0_6"/>
<dbReference type="UniPathway" id="UPA00379">
    <property type="reaction ID" value="UER00552"/>
</dbReference>
<dbReference type="Proteomes" id="UP000001734">
    <property type="component" value="Chromosome"/>
</dbReference>
<dbReference type="GO" id="GO:0008783">
    <property type="term" value="F:agmatinase activity"/>
    <property type="evidence" value="ECO:0007669"/>
    <property type="project" value="TreeGrafter"/>
</dbReference>
<dbReference type="GO" id="GO:0050415">
    <property type="term" value="F:formimidoylglutamase activity"/>
    <property type="evidence" value="ECO:0007669"/>
    <property type="project" value="UniProtKB-UniRule"/>
</dbReference>
<dbReference type="GO" id="GO:0030145">
    <property type="term" value="F:manganese ion binding"/>
    <property type="evidence" value="ECO:0007669"/>
    <property type="project" value="UniProtKB-UniRule"/>
</dbReference>
<dbReference type="GO" id="GO:0019556">
    <property type="term" value="P:L-histidine catabolic process to glutamate and formamide"/>
    <property type="evidence" value="ECO:0007669"/>
    <property type="project" value="UniProtKB-UniPathway"/>
</dbReference>
<dbReference type="GO" id="GO:0019557">
    <property type="term" value="P:L-histidine catabolic process to glutamate and formate"/>
    <property type="evidence" value="ECO:0007669"/>
    <property type="project" value="UniProtKB-UniPathway"/>
</dbReference>
<dbReference type="GO" id="GO:0033389">
    <property type="term" value="P:putrescine biosynthetic process from arginine, via agmatine"/>
    <property type="evidence" value="ECO:0007669"/>
    <property type="project" value="TreeGrafter"/>
</dbReference>
<dbReference type="CDD" id="cd09988">
    <property type="entry name" value="Formimidoylglutamase"/>
    <property type="match status" value="1"/>
</dbReference>
<dbReference type="Gene3D" id="3.40.800.10">
    <property type="entry name" value="Ureohydrolase domain"/>
    <property type="match status" value="1"/>
</dbReference>
<dbReference type="HAMAP" id="MF_00737">
    <property type="entry name" value="Formimidoylglutam"/>
    <property type="match status" value="1"/>
</dbReference>
<dbReference type="InterPro" id="IPR005923">
    <property type="entry name" value="HutG"/>
</dbReference>
<dbReference type="InterPro" id="IPR006035">
    <property type="entry name" value="Ureohydrolase"/>
</dbReference>
<dbReference type="InterPro" id="IPR023696">
    <property type="entry name" value="Ureohydrolase_dom_sf"/>
</dbReference>
<dbReference type="InterPro" id="IPR020855">
    <property type="entry name" value="Ureohydrolase_Mn_BS"/>
</dbReference>
<dbReference type="NCBIfam" id="TIGR01227">
    <property type="entry name" value="hutG"/>
    <property type="match status" value="1"/>
</dbReference>
<dbReference type="PANTHER" id="PTHR11358">
    <property type="entry name" value="ARGINASE/AGMATINASE"/>
    <property type="match status" value="1"/>
</dbReference>
<dbReference type="PANTHER" id="PTHR11358:SF35">
    <property type="entry name" value="FORMIMIDOYLGLUTAMASE"/>
    <property type="match status" value="1"/>
</dbReference>
<dbReference type="Pfam" id="PF00491">
    <property type="entry name" value="Arginase"/>
    <property type="match status" value="1"/>
</dbReference>
<dbReference type="PIRSF" id="PIRSF036979">
    <property type="entry name" value="Arginase"/>
    <property type="match status" value="1"/>
</dbReference>
<dbReference type="PRINTS" id="PR00116">
    <property type="entry name" value="ARGINASE"/>
</dbReference>
<dbReference type="SUPFAM" id="SSF52768">
    <property type="entry name" value="Arginase/deacetylase"/>
    <property type="match status" value="1"/>
</dbReference>
<dbReference type="PROSITE" id="PS01053">
    <property type="entry name" value="ARGINASE_1"/>
    <property type="match status" value="1"/>
</dbReference>
<dbReference type="PROSITE" id="PS51409">
    <property type="entry name" value="ARGINASE_2"/>
    <property type="match status" value="1"/>
</dbReference>
<gene>
    <name evidence="1" type="primary">hutG</name>
    <name type="ordered locus">KPK_3780</name>
</gene>
<accession>B5XZ82</accession>